<evidence type="ECO:0000255" key="1">
    <source>
        <dbReference type="HAMAP-Rule" id="MF_00657"/>
    </source>
</evidence>
<dbReference type="EC" id="1.14.11.-" evidence="1"/>
<dbReference type="EMBL" id="CU928158">
    <property type="protein sequence ID" value="CAQ89805.1"/>
    <property type="molecule type" value="Genomic_DNA"/>
</dbReference>
<dbReference type="RefSeq" id="WP_000990142.1">
    <property type="nucleotide sequence ID" value="NC_011740.1"/>
</dbReference>
<dbReference type="SMR" id="B7LJV5"/>
<dbReference type="GeneID" id="75056666"/>
<dbReference type="KEGG" id="efe:EFER_2304"/>
<dbReference type="HOGENOM" id="CLU_106663_0_0_6"/>
<dbReference type="OrthoDB" id="9812472at2"/>
<dbReference type="Proteomes" id="UP000000745">
    <property type="component" value="Chromosome"/>
</dbReference>
<dbReference type="GO" id="GO:0016706">
    <property type="term" value="F:2-oxoglutarate-dependent dioxygenase activity"/>
    <property type="evidence" value="ECO:0007669"/>
    <property type="project" value="UniProtKB-UniRule"/>
</dbReference>
<dbReference type="GO" id="GO:0005506">
    <property type="term" value="F:iron ion binding"/>
    <property type="evidence" value="ECO:0007669"/>
    <property type="project" value="UniProtKB-UniRule"/>
</dbReference>
<dbReference type="GO" id="GO:0031418">
    <property type="term" value="F:L-ascorbic acid binding"/>
    <property type="evidence" value="ECO:0007669"/>
    <property type="project" value="UniProtKB-KW"/>
</dbReference>
<dbReference type="GO" id="GO:0006974">
    <property type="term" value="P:DNA damage response"/>
    <property type="evidence" value="ECO:0007669"/>
    <property type="project" value="TreeGrafter"/>
</dbReference>
<dbReference type="GO" id="GO:0006879">
    <property type="term" value="P:intracellular iron ion homeostasis"/>
    <property type="evidence" value="ECO:0007669"/>
    <property type="project" value="TreeGrafter"/>
</dbReference>
<dbReference type="FunFam" id="2.60.120.620:FF:000006">
    <property type="entry name" value="PKHD-type hydroxylase YbiX"/>
    <property type="match status" value="1"/>
</dbReference>
<dbReference type="FunFam" id="4.10.860.20:FF:000001">
    <property type="entry name" value="PKHD-type hydroxylase YbiX"/>
    <property type="match status" value="1"/>
</dbReference>
<dbReference type="Gene3D" id="2.60.120.620">
    <property type="entry name" value="q2cbj1_9rhob like domain"/>
    <property type="match status" value="1"/>
</dbReference>
<dbReference type="Gene3D" id="4.10.860.20">
    <property type="entry name" value="Rabenosyn, Rab binding domain"/>
    <property type="match status" value="1"/>
</dbReference>
<dbReference type="HAMAP" id="MF_00657">
    <property type="entry name" value="Hydroxyl_YbiX"/>
    <property type="match status" value="1"/>
</dbReference>
<dbReference type="InterPro" id="IPR005123">
    <property type="entry name" value="Oxoglu/Fe-dep_dioxygenase_dom"/>
</dbReference>
<dbReference type="InterPro" id="IPR041097">
    <property type="entry name" value="PKHD_C"/>
</dbReference>
<dbReference type="InterPro" id="IPR023550">
    <property type="entry name" value="PKHD_hydroxylase"/>
</dbReference>
<dbReference type="InterPro" id="IPR006620">
    <property type="entry name" value="Pro_4_hyd_alph"/>
</dbReference>
<dbReference type="InterPro" id="IPR044862">
    <property type="entry name" value="Pro_4_hyd_alph_FE2OG_OXY"/>
</dbReference>
<dbReference type="NCBIfam" id="NF003972">
    <property type="entry name" value="PRK05467.1-1"/>
    <property type="match status" value="1"/>
</dbReference>
<dbReference type="NCBIfam" id="NF003974">
    <property type="entry name" value="PRK05467.1-3"/>
    <property type="match status" value="1"/>
</dbReference>
<dbReference type="NCBIfam" id="NF003975">
    <property type="entry name" value="PRK05467.1-4"/>
    <property type="match status" value="1"/>
</dbReference>
<dbReference type="PANTHER" id="PTHR41536">
    <property type="entry name" value="PKHD-TYPE HYDROXYLASE YBIX"/>
    <property type="match status" value="1"/>
</dbReference>
<dbReference type="PANTHER" id="PTHR41536:SF1">
    <property type="entry name" value="PKHD-TYPE HYDROXYLASE YBIX"/>
    <property type="match status" value="1"/>
</dbReference>
<dbReference type="Pfam" id="PF13640">
    <property type="entry name" value="2OG-FeII_Oxy_3"/>
    <property type="match status" value="1"/>
</dbReference>
<dbReference type="Pfam" id="PF18331">
    <property type="entry name" value="PKHD_C"/>
    <property type="match status" value="1"/>
</dbReference>
<dbReference type="SMART" id="SM00702">
    <property type="entry name" value="P4Hc"/>
    <property type="match status" value="1"/>
</dbReference>
<dbReference type="SUPFAM" id="SSF51197">
    <property type="entry name" value="Clavaminate synthase-like"/>
    <property type="match status" value="1"/>
</dbReference>
<dbReference type="PROSITE" id="PS51471">
    <property type="entry name" value="FE2OG_OXY"/>
    <property type="match status" value="1"/>
</dbReference>
<reference key="1">
    <citation type="journal article" date="2009" name="PLoS Genet.">
        <title>Organised genome dynamics in the Escherichia coli species results in highly diverse adaptive paths.</title>
        <authorList>
            <person name="Touchon M."/>
            <person name="Hoede C."/>
            <person name="Tenaillon O."/>
            <person name="Barbe V."/>
            <person name="Baeriswyl S."/>
            <person name="Bidet P."/>
            <person name="Bingen E."/>
            <person name="Bonacorsi S."/>
            <person name="Bouchier C."/>
            <person name="Bouvet O."/>
            <person name="Calteau A."/>
            <person name="Chiapello H."/>
            <person name="Clermont O."/>
            <person name="Cruveiller S."/>
            <person name="Danchin A."/>
            <person name="Diard M."/>
            <person name="Dossat C."/>
            <person name="Karoui M.E."/>
            <person name="Frapy E."/>
            <person name="Garry L."/>
            <person name="Ghigo J.M."/>
            <person name="Gilles A.M."/>
            <person name="Johnson J."/>
            <person name="Le Bouguenec C."/>
            <person name="Lescat M."/>
            <person name="Mangenot S."/>
            <person name="Martinez-Jehanne V."/>
            <person name="Matic I."/>
            <person name="Nassif X."/>
            <person name="Oztas S."/>
            <person name="Petit M.A."/>
            <person name="Pichon C."/>
            <person name="Rouy Z."/>
            <person name="Ruf C.S."/>
            <person name="Schneider D."/>
            <person name="Tourret J."/>
            <person name="Vacherie B."/>
            <person name="Vallenet D."/>
            <person name="Medigue C."/>
            <person name="Rocha E.P.C."/>
            <person name="Denamur E."/>
        </authorList>
    </citation>
    <scope>NUCLEOTIDE SEQUENCE [LARGE SCALE GENOMIC DNA]</scope>
    <source>
        <strain>ATCC 35469 / DSM 13698 / BCRC 15582 / CCUG 18766 / IAM 14443 / JCM 21226 / LMG 7866 / NBRC 102419 / NCTC 12128 / CDC 0568-73</strain>
    </source>
</reference>
<comment type="cofactor">
    <cofactor evidence="1">
        <name>Fe(2+)</name>
        <dbReference type="ChEBI" id="CHEBI:29033"/>
    </cofactor>
    <text evidence="1">Binds 1 Fe(2+) ion per subunit.</text>
</comment>
<comment type="cofactor">
    <cofactor evidence="1">
        <name>L-ascorbate</name>
        <dbReference type="ChEBI" id="CHEBI:38290"/>
    </cofactor>
</comment>
<protein>
    <recommendedName>
        <fullName evidence="1">PKHD-type hydroxylase YbiX</fullName>
        <ecNumber evidence="1">1.14.11.-</ecNumber>
    </recommendedName>
</protein>
<accession>B7LJV5</accession>
<gene>
    <name evidence="1" type="primary">ybiX</name>
    <name type="ordered locus">EFER_2304</name>
</gene>
<feature type="chain" id="PRO_1000131214" description="PKHD-type hydroxylase YbiX">
    <location>
        <begin position="1"/>
        <end position="225"/>
    </location>
</feature>
<feature type="domain" description="Fe2OG dioxygenase" evidence="1">
    <location>
        <begin position="78"/>
        <end position="177"/>
    </location>
</feature>
<feature type="binding site" evidence="1">
    <location>
        <position position="96"/>
    </location>
    <ligand>
        <name>Fe cation</name>
        <dbReference type="ChEBI" id="CHEBI:24875"/>
    </ligand>
</feature>
<feature type="binding site" evidence="1">
    <location>
        <position position="98"/>
    </location>
    <ligand>
        <name>Fe cation</name>
        <dbReference type="ChEBI" id="CHEBI:24875"/>
    </ligand>
</feature>
<feature type="binding site" evidence="1">
    <location>
        <position position="158"/>
    </location>
    <ligand>
        <name>Fe cation</name>
        <dbReference type="ChEBI" id="CHEBI:24875"/>
    </ligand>
</feature>
<feature type="binding site" evidence="1">
    <location>
        <position position="168"/>
    </location>
    <ligand>
        <name>2-oxoglutarate</name>
        <dbReference type="ChEBI" id="CHEBI:16810"/>
    </ligand>
</feature>
<sequence>MMYHIPGVLSPKDVARFREQLEQAEWVDGRVTTGAQGAQVKNNQQVDTRSALYAALQNEVLNAVNQHALFFAAALPRTLSTPLFNRYQNNETYGFHVDGAVRSHPQNGWMRTDLSATLFLSDPQSYDGGELVVNDTFGQHRVKLPAGDLVLYPSSSLHCVTPVTRGVRVASFMWIQSMIRDDKKRAMLFELDTNIQSLKSRHGESEEILSLLNLYHNLLREWSEI</sequence>
<proteinExistence type="inferred from homology"/>
<name>YBIX_ESCF3</name>
<keyword id="KW-0223">Dioxygenase</keyword>
<keyword id="KW-0408">Iron</keyword>
<keyword id="KW-0479">Metal-binding</keyword>
<keyword id="KW-0560">Oxidoreductase</keyword>
<keyword id="KW-0847">Vitamin C</keyword>
<organism>
    <name type="scientific">Escherichia fergusonii (strain ATCC 35469 / DSM 13698 / CCUG 18766 / IAM 14443 / JCM 21226 / LMG 7866 / NBRC 102419 / NCTC 12128 / CDC 0568-73)</name>
    <dbReference type="NCBI Taxonomy" id="585054"/>
    <lineage>
        <taxon>Bacteria</taxon>
        <taxon>Pseudomonadati</taxon>
        <taxon>Pseudomonadota</taxon>
        <taxon>Gammaproteobacteria</taxon>
        <taxon>Enterobacterales</taxon>
        <taxon>Enterobacteriaceae</taxon>
        <taxon>Escherichia</taxon>
    </lineage>
</organism>